<comment type="function">
    <text evidence="1">Necessary for the introduction of cis unsaturation into fatty acids. Catalyzes the dehydration of (3R)-3-hydroxydecanoyl-ACP to E-(2)-decenoyl-ACP and then its isomerization to Z-(3)-decenoyl-ACP. Can catalyze the dehydratase reaction for beta-hydroxyacyl-ACPs with saturated chain lengths up to 16:0, being most active on intermediate chain length.</text>
</comment>
<comment type="catalytic activity">
    <reaction evidence="1">
        <text>a (3R)-hydroxyacyl-[ACP] = a (2E)-enoyl-[ACP] + H2O</text>
        <dbReference type="Rhea" id="RHEA:13097"/>
        <dbReference type="Rhea" id="RHEA-COMP:9925"/>
        <dbReference type="Rhea" id="RHEA-COMP:9945"/>
        <dbReference type="ChEBI" id="CHEBI:15377"/>
        <dbReference type="ChEBI" id="CHEBI:78784"/>
        <dbReference type="ChEBI" id="CHEBI:78827"/>
        <dbReference type="EC" id="4.2.1.59"/>
    </reaction>
</comment>
<comment type="catalytic activity">
    <reaction evidence="1">
        <text>(3R)-hydroxydecanoyl-[ACP] = (2E)-decenoyl-[ACP] + H2O</text>
        <dbReference type="Rhea" id="RHEA:41860"/>
        <dbReference type="Rhea" id="RHEA-COMP:9638"/>
        <dbReference type="Rhea" id="RHEA-COMP:9639"/>
        <dbReference type="ChEBI" id="CHEBI:15377"/>
        <dbReference type="ChEBI" id="CHEBI:78466"/>
        <dbReference type="ChEBI" id="CHEBI:78467"/>
    </reaction>
</comment>
<comment type="catalytic activity">
    <reaction evidence="1">
        <text>(2E)-decenoyl-[ACP] = (3Z)-decenoyl-[ACP]</text>
        <dbReference type="Rhea" id="RHEA:23568"/>
        <dbReference type="Rhea" id="RHEA-COMP:9639"/>
        <dbReference type="Rhea" id="RHEA-COMP:9927"/>
        <dbReference type="ChEBI" id="CHEBI:78467"/>
        <dbReference type="ChEBI" id="CHEBI:78798"/>
        <dbReference type="EC" id="5.3.3.14"/>
    </reaction>
</comment>
<comment type="pathway">
    <text evidence="1">Lipid metabolism; fatty acid biosynthesis.</text>
</comment>
<comment type="subunit">
    <text evidence="1">Homodimer.</text>
</comment>
<comment type="subcellular location">
    <subcellularLocation>
        <location evidence="1">Cytoplasm</location>
    </subcellularLocation>
</comment>
<comment type="similarity">
    <text evidence="1">Belongs to the thioester dehydratase family. FabA subfamily.</text>
</comment>
<protein>
    <recommendedName>
        <fullName evidence="1">3-hydroxydecanoyl-[acyl-carrier-protein] dehydratase</fullName>
        <ecNumber evidence="1">4.2.1.59</ecNumber>
    </recommendedName>
    <alternativeName>
        <fullName evidence="1">3-hydroxyacyl-[acyl-carrier-protein] dehydratase FabA</fullName>
    </alternativeName>
    <alternativeName>
        <fullName evidence="1">Beta-hydroxydecanoyl thioester dehydrase</fullName>
    </alternativeName>
    <alternativeName>
        <fullName evidence="1">Trans-2-decenoyl-[acyl-carrier-protein] isomerase</fullName>
        <ecNumber evidence="1">5.3.3.14</ecNumber>
    </alternativeName>
</protein>
<reference key="1">
    <citation type="journal article" date="2009" name="J. Bacteriol.">
        <title>Complete genome sequence and comparative genome analysis of enteropathogenic Escherichia coli O127:H6 strain E2348/69.</title>
        <authorList>
            <person name="Iguchi A."/>
            <person name="Thomson N.R."/>
            <person name="Ogura Y."/>
            <person name="Saunders D."/>
            <person name="Ooka T."/>
            <person name="Henderson I.R."/>
            <person name="Harris D."/>
            <person name="Asadulghani M."/>
            <person name="Kurokawa K."/>
            <person name="Dean P."/>
            <person name="Kenny B."/>
            <person name="Quail M.A."/>
            <person name="Thurston S."/>
            <person name="Dougan G."/>
            <person name="Hayashi T."/>
            <person name="Parkhill J."/>
            <person name="Frankel G."/>
        </authorList>
    </citation>
    <scope>NUCLEOTIDE SEQUENCE [LARGE SCALE GENOMIC DNA]</scope>
    <source>
        <strain>E2348/69 / EPEC</strain>
    </source>
</reference>
<evidence type="ECO:0000255" key="1">
    <source>
        <dbReference type="HAMAP-Rule" id="MF_00405"/>
    </source>
</evidence>
<name>FABA_ECO27</name>
<dbReference type="EC" id="4.2.1.59" evidence="1"/>
<dbReference type="EC" id="5.3.3.14" evidence="1"/>
<dbReference type="EMBL" id="FM180568">
    <property type="protein sequence ID" value="CAS08488.1"/>
    <property type="molecule type" value="Genomic_DNA"/>
</dbReference>
<dbReference type="RefSeq" id="WP_000227926.1">
    <property type="nucleotide sequence ID" value="NC_011601.1"/>
</dbReference>
<dbReference type="SMR" id="B7UN33"/>
<dbReference type="GeneID" id="93245035"/>
<dbReference type="KEGG" id="ecg:E2348C_0940"/>
<dbReference type="HOGENOM" id="CLU_097925_0_0_6"/>
<dbReference type="UniPathway" id="UPA00094"/>
<dbReference type="Proteomes" id="UP000008205">
    <property type="component" value="Chromosome"/>
</dbReference>
<dbReference type="GO" id="GO:0005737">
    <property type="term" value="C:cytoplasm"/>
    <property type="evidence" value="ECO:0007669"/>
    <property type="project" value="UniProtKB-SubCell"/>
</dbReference>
<dbReference type="GO" id="GO:0019171">
    <property type="term" value="F:(3R)-hydroxyacyl-[acyl-carrier-protein] dehydratase activity"/>
    <property type="evidence" value="ECO:0007669"/>
    <property type="project" value="UniProtKB-UniRule"/>
</dbReference>
<dbReference type="GO" id="GO:0034017">
    <property type="term" value="F:trans-2-decenoyl-acyl-carrier-protein isomerase activity"/>
    <property type="evidence" value="ECO:0007669"/>
    <property type="project" value="UniProtKB-UniRule"/>
</dbReference>
<dbReference type="GO" id="GO:0006636">
    <property type="term" value="P:unsaturated fatty acid biosynthetic process"/>
    <property type="evidence" value="ECO:0007669"/>
    <property type="project" value="UniProtKB-UniRule"/>
</dbReference>
<dbReference type="CDD" id="cd01287">
    <property type="entry name" value="FabA"/>
    <property type="match status" value="1"/>
</dbReference>
<dbReference type="FunFam" id="3.10.129.10:FF:000003">
    <property type="entry name" value="3-hydroxydecanoyl-[acyl-carrier-protein] dehydratase"/>
    <property type="match status" value="1"/>
</dbReference>
<dbReference type="Gene3D" id="3.10.129.10">
    <property type="entry name" value="Hotdog Thioesterase"/>
    <property type="match status" value="1"/>
</dbReference>
<dbReference type="HAMAP" id="MF_00405">
    <property type="entry name" value="FabA"/>
    <property type="match status" value="1"/>
</dbReference>
<dbReference type="InterPro" id="IPR010083">
    <property type="entry name" value="FabA"/>
</dbReference>
<dbReference type="InterPro" id="IPR013114">
    <property type="entry name" value="FabA_FabZ"/>
</dbReference>
<dbReference type="InterPro" id="IPR029069">
    <property type="entry name" value="HotDog_dom_sf"/>
</dbReference>
<dbReference type="NCBIfam" id="TIGR01749">
    <property type="entry name" value="fabA"/>
    <property type="match status" value="1"/>
</dbReference>
<dbReference type="NCBIfam" id="NF003509">
    <property type="entry name" value="PRK05174.1"/>
    <property type="match status" value="1"/>
</dbReference>
<dbReference type="PANTHER" id="PTHR30272">
    <property type="entry name" value="3-HYDROXYACYL-[ACYL-CARRIER-PROTEIN] DEHYDRATASE"/>
    <property type="match status" value="1"/>
</dbReference>
<dbReference type="PANTHER" id="PTHR30272:SF8">
    <property type="entry name" value="3-HYDROXYDECANOYL-[ACYL-CARRIER-PROTEIN] DEHYDRATASE"/>
    <property type="match status" value="1"/>
</dbReference>
<dbReference type="Pfam" id="PF07977">
    <property type="entry name" value="FabA"/>
    <property type="match status" value="1"/>
</dbReference>
<dbReference type="SUPFAM" id="SSF54637">
    <property type="entry name" value="Thioesterase/thiol ester dehydrase-isomerase"/>
    <property type="match status" value="1"/>
</dbReference>
<proteinExistence type="inferred from homology"/>
<keyword id="KW-0963">Cytoplasm</keyword>
<keyword id="KW-0275">Fatty acid biosynthesis</keyword>
<keyword id="KW-0276">Fatty acid metabolism</keyword>
<keyword id="KW-0413">Isomerase</keyword>
<keyword id="KW-0444">Lipid biosynthesis</keyword>
<keyword id="KW-0443">Lipid metabolism</keyword>
<keyword id="KW-0456">Lyase</keyword>
<keyword id="KW-1185">Reference proteome</keyword>
<feature type="chain" id="PRO_1000201181" description="3-hydroxydecanoyl-[acyl-carrier-protein] dehydratase">
    <location>
        <begin position="1"/>
        <end position="172"/>
    </location>
</feature>
<feature type="active site" evidence="1">
    <location>
        <position position="71"/>
    </location>
</feature>
<sequence>MVDKRESYTKEDLLASGRGELFGAKGPQLPAPNMLMMDRVVKMTETGGNFDKGYVEAELDINPDLWFFGCHFIGDPVMPGCLGLDAMWQLVGFYLGWLGGEGKGRALGVGEVKFTGQVLPTAKKVTYRIHFKRIVNRRLIMGLADGEVLVDGRLIYTANDLKVGLFQDTSAF</sequence>
<gene>
    <name evidence="1" type="primary">fabA</name>
    <name type="ordered locus">E2348C_0940</name>
</gene>
<organism>
    <name type="scientific">Escherichia coli O127:H6 (strain E2348/69 / EPEC)</name>
    <dbReference type="NCBI Taxonomy" id="574521"/>
    <lineage>
        <taxon>Bacteria</taxon>
        <taxon>Pseudomonadati</taxon>
        <taxon>Pseudomonadota</taxon>
        <taxon>Gammaproteobacteria</taxon>
        <taxon>Enterobacterales</taxon>
        <taxon>Enterobacteriaceae</taxon>
        <taxon>Escherichia</taxon>
    </lineage>
</organism>
<accession>B7UN33</accession>